<sequence length="270" mass="30877">MFTILLSLAILVFVPFLYKANRNTKDVKVNTISIDQKDGLPARKKLNILHLSDLHLENISVSPEELYHLTKDQPVDIIALTGDFLDRKRNIPKLAGYLNALQKLKPAYGMYAVFGNHDYVLKEEDFQRLKRVLEENGCITLQNEHVRIETAAGPVNIIGIDDYSTNRSNITGSYQSLENGYHLVLTHDPNIILDMKDVHYDYLLSGHFHGGQIHWPKPYHLVKMGKLVRMNMIKGLHYHHDKPFYISEGLGQTGVNIRVGSRPEVTFHQI</sequence>
<keyword id="KW-0378">Hydrolase</keyword>
<keyword id="KW-0479">Metal-binding</keyword>
<keyword id="KW-1185">Reference proteome</keyword>
<gene>
    <name type="primary">ykoQ</name>
    <name type="ordered locus">BSU13370</name>
</gene>
<protein>
    <recommendedName>
        <fullName>Uncharacterized metallophosphoesterase YkoQ</fullName>
        <ecNumber>3.1.-.-</ecNumber>
    </recommendedName>
</protein>
<name>YKOQ_BACSU</name>
<reference key="1">
    <citation type="submission" date="1997-11" db="EMBL/GenBank/DDBJ databases">
        <title>Sequence of the Bacillus subtilis genome between xlyA and ykoR.</title>
        <authorList>
            <person name="Devine K.M."/>
        </authorList>
    </citation>
    <scope>NUCLEOTIDE SEQUENCE [GENOMIC DNA]</scope>
    <source>
        <strain>168</strain>
    </source>
</reference>
<reference key="2">
    <citation type="journal article" date="1997" name="Nature">
        <title>The complete genome sequence of the Gram-positive bacterium Bacillus subtilis.</title>
        <authorList>
            <person name="Kunst F."/>
            <person name="Ogasawara N."/>
            <person name="Moszer I."/>
            <person name="Albertini A.M."/>
            <person name="Alloni G."/>
            <person name="Azevedo V."/>
            <person name="Bertero M.G."/>
            <person name="Bessieres P."/>
            <person name="Bolotin A."/>
            <person name="Borchert S."/>
            <person name="Borriss R."/>
            <person name="Boursier L."/>
            <person name="Brans A."/>
            <person name="Braun M."/>
            <person name="Brignell S.C."/>
            <person name="Bron S."/>
            <person name="Brouillet S."/>
            <person name="Bruschi C.V."/>
            <person name="Caldwell B."/>
            <person name="Capuano V."/>
            <person name="Carter N.M."/>
            <person name="Choi S.-K."/>
            <person name="Codani J.-J."/>
            <person name="Connerton I.F."/>
            <person name="Cummings N.J."/>
            <person name="Daniel R.A."/>
            <person name="Denizot F."/>
            <person name="Devine K.M."/>
            <person name="Duesterhoeft A."/>
            <person name="Ehrlich S.D."/>
            <person name="Emmerson P.T."/>
            <person name="Entian K.-D."/>
            <person name="Errington J."/>
            <person name="Fabret C."/>
            <person name="Ferrari E."/>
            <person name="Foulger D."/>
            <person name="Fritz C."/>
            <person name="Fujita M."/>
            <person name="Fujita Y."/>
            <person name="Fuma S."/>
            <person name="Galizzi A."/>
            <person name="Galleron N."/>
            <person name="Ghim S.-Y."/>
            <person name="Glaser P."/>
            <person name="Goffeau A."/>
            <person name="Golightly E.J."/>
            <person name="Grandi G."/>
            <person name="Guiseppi G."/>
            <person name="Guy B.J."/>
            <person name="Haga K."/>
            <person name="Haiech J."/>
            <person name="Harwood C.R."/>
            <person name="Henaut A."/>
            <person name="Hilbert H."/>
            <person name="Holsappel S."/>
            <person name="Hosono S."/>
            <person name="Hullo M.-F."/>
            <person name="Itaya M."/>
            <person name="Jones L.-M."/>
            <person name="Joris B."/>
            <person name="Karamata D."/>
            <person name="Kasahara Y."/>
            <person name="Klaerr-Blanchard M."/>
            <person name="Klein C."/>
            <person name="Kobayashi Y."/>
            <person name="Koetter P."/>
            <person name="Koningstein G."/>
            <person name="Krogh S."/>
            <person name="Kumano M."/>
            <person name="Kurita K."/>
            <person name="Lapidus A."/>
            <person name="Lardinois S."/>
            <person name="Lauber J."/>
            <person name="Lazarevic V."/>
            <person name="Lee S.-M."/>
            <person name="Levine A."/>
            <person name="Liu H."/>
            <person name="Masuda S."/>
            <person name="Mauel C."/>
            <person name="Medigue C."/>
            <person name="Medina N."/>
            <person name="Mellado R.P."/>
            <person name="Mizuno M."/>
            <person name="Moestl D."/>
            <person name="Nakai S."/>
            <person name="Noback M."/>
            <person name="Noone D."/>
            <person name="O'Reilly M."/>
            <person name="Ogawa K."/>
            <person name="Ogiwara A."/>
            <person name="Oudega B."/>
            <person name="Park S.-H."/>
            <person name="Parro V."/>
            <person name="Pohl T.M."/>
            <person name="Portetelle D."/>
            <person name="Porwollik S."/>
            <person name="Prescott A.M."/>
            <person name="Presecan E."/>
            <person name="Pujic P."/>
            <person name="Purnelle B."/>
            <person name="Rapoport G."/>
            <person name="Rey M."/>
            <person name="Reynolds S."/>
            <person name="Rieger M."/>
            <person name="Rivolta C."/>
            <person name="Rocha E."/>
            <person name="Roche B."/>
            <person name="Rose M."/>
            <person name="Sadaie Y."/>
            <person name="Sato T."/>
            <person name="Scanlan E."/>
            <person name="Schleich S."/>
            <person name="Schroeter R."/>
            <person name="Scoffone F."/>
            <person name="Sekiguchi J."/>
            <person name="Sekowska A."/>
            <person name="Seror S.J."/>
            <person name="Serror P."/>
            <person name="Shin B.-S."/>
            <person name="Soldo B."/>
            <person name="Sorokin A."/>
            <person name="Tacconi E."/>
            <person name="Takagi T."/>
            <person name="Takahashi H."/>
            <person name="Takemaru K."/>
            <person name="Takeuchi M."/>
            <person name="Tamakoshi A."/>
            <person name="Tanaka T."/>
            <person name="Terpstra P."/>
            <person name="Tognoni A."/>
            <person name="Tosato V."/>
            <person name="Uchiyama S."/>
            <person name="Vandenbol M."/>
            <person name="Vannier F."/>
            <person name="Vassarotti A."/>
            <person name="Viari A."/>
            <person name="Wambutt R."/>
            <person name="Wedler E."/>
            <person name="Wedler H."/>
            <person name="Weitzenegger T."/>
            <person name="Winters P."/>
            <person name="Wipat A."/>
            <person name="Yamamoto H."/>
            <person name="Yamane K."/>
            <person name="Yasumoto K."/>
            <person name="Yata K."/>
            <person name="Yoshida K."/>
            <person name="Yoshikawa H.-F."/>
            <person name="Zumstein E."/>
            <person name="Yoshikawa H."/>
            <person name="Danchin A."/>
        </authorList>
    </citation>
    <scope>NUCLEOTIDE SEQUENCE [LARGE SCALE GENOMIC DNA]</scope>
    <source>
        <strain>168</strain>
    </source>
</reference>
<dbReference type="EC" id="3.1.-.-"/>
<dbReference type="EMBL" id="AJ002571">
    <property type="protein sequence ID" value="CAA05614.1"/>
    <property type="molecule type" value="Genomic_DNA"/>
</dbReference>
<dbReference type="EMBL" id="AL009126">
    <property type="protein sequence ID" value="CAB13194.1"/>
    <property type="molecule type" value="Genomic_DNA"/>
</dbReference>
<dbReference type="PIR" id="D69860">
    <property type="entry name" value="D69860"/>
</dbReference>
<dbReference type="RefSeq" id="NP_389220.1">
    <property type="nucleotide sequence ID" value="NC_000964.3"/>
</dbReference>
<dbReference type="RefSeq" id="WP_003245342.1">
    <property type="nucleotide sequence ID" value="NZ_OZ025638.1"/>
</dbReference>
<dbReference type="SMR" id="O35040"/>
<dbReference type="FunCoup" id="O35040">
    <property type="interactions" value="69"/>
</dbReference>
<dbReference type="STRING" id="224308.BSU13370"/>
<dbReference type="PaxDb" id="224308-BSU13370"/>
<dbReference type="EnsemblBacteria" id="CAB13194">
    <property type="protein sequence ID" value="CAB13194"/>
    <property type="gene ID" value="BSU_13370"/>
</dbReference>
<dbReference type="GeneID" id="939388"/>
<dbReference type="KEGG" id="bsu:BSU13370"/>
<dbReference type="PATRIC" id="fig|224308.179.peg.1452"/>
<dbReference type="eggNOG" id="COG1408">
    <property type="taxonomic scope" value="Bacteria"/>
</dbReference>
<dbReference type="InParanoid" id="O35040"/>
<dbReference type="OrthoDB" id="9780884at2"/>
<dbReference type="PhylomeDB" id="O35040"/>
<dbReference type="BioCyc" id="BSUB:BSU13370-MONOMER"/>
<dbReference type="Proteomes" id="UP000001570">
    <property type="component" value="Chromosome"/>
</dbReference>
<dbReference type="GO" id="GO:0016020">
    <property type="term" value="C:membrane"/>
    <property type="evidence" value="ECO:0007669"/>
    <property type="project" value="GOC"/>
</dbReference>
<dbReference type="GO" id="GO:0046872">
    <property type="term" value="F:metal ion binding"/>
    <property type="evidence" value="ECO:0007669"/>
    <property type="project" value="UniProtKB-KW"/>
</dbReference>
<dbReference type="GO" id="GO:0008758">
    <property type="term" value="F:UDP-2,3-diacylglucosamine hydrolase activity"/>
    <property type="evidence" value="ECO:0000318"/>
    <property type="project" value="GO_Central"/>
</dbReference>
<dbReference type="GO" id="GO:0009245">
    <property type="term" value="P:lipid A biosynthetic process"/>
    <property type="evidence" value="ECO:0000318"/>
    <property type="project" value="GO_Central"/>
</dbReference>
<dbReference type="Gene3D" id="3.60.21.10">
    <property type="match status" value="1"/>
</dbReference>
<dbReference type="InterPro" id="IPR004843">
    <property type="entry name" value="Calcineurin-like_PHP_ApaH"/>
</dbReference>
<dbReference type="InterPro" id="IPR029052">
    <property type="entry name" value="Metallo-depent_PP-like"/>
</dbReference>
<dbReference type="InterPro" id="IPR051158">
    <property type="entry name" value="Metallophosphoesterase_sf"/>
</dbReference>
<dbReference type="PANTHER" id="PTHR31302:SF31">
    <property type="entry name" value="PHOSPHODIESTERASE YAEI"/>
    <property type="match status" value="1"/>
</dbReference>
<dbReference type="PANTHER" id="PTHR31302">
    <property type="entry name" value="TRANSMEMBRANE PROTEIN WITH METALLOPHOSPHOESTERASE DOMAIN-RELATED"/>
    <property type="match status" value="1"/>
</dbReference>
<dbReference type="Pfam" id="PF00149">
    <property type="entry name" value="Metallophos"/>
    <property type="match status" value="1"/>
</dbReference>
<dbReference type="SUPFAM" id="SSF56300">
    <property type="entry name" value="Metallo-dependent phosphatases"/>
    <property type="match status" value="1"/>
</dbReference>
<feature type="chain" id="PRO_0000172851" description="Uncharacterized metallophosphoesterase YkoQ">
    <location>
        <begin position="1"/>
        <end position="270"/>
    </location>
</feature>
<feature type="binding site" evidence="1">
    <location>
        <position position="53"/>
    </location>
    <ligand>
        <name>a divalent metal cation</name>
        <dbReference type="ChEBI" id="CHEBI:60240"/>
        <label>1</label>
    </ligand>
</feature>
<feature type="binding site" evidence="1">
    <location>
        <position position="55"/>
    </location>
    <ligand>
        <name>a divalent metal cation</name>
        <dbReference type="ChEBI" id="CHEBI:60240"/>
        <label>1</label>
    </ligand>
</feature>
<feature type="binding site" evidence="1">
    <location>
        <position position="83"/>
    </location>
    <ligand>
        <name>a divalent metal cation</name>
        <dbReference type="ChEBI" id="CHEBI:60240"/>
        <label>1</label>
    </ligand>
</feature>
<feature type="binding site" evidence="1">
    <location>
        <position position="83"/>
    </location>
    <ligand>
        <name>a divalent metal cation</name>
        <dbReference type="ChEBI" id="CHEBI:60240"/>
        <label>2</label>
    </ligand>
</feature>
<feature type="binding site" evidence="1">
    <location>
        <position position="116"/>
    </location>
    <ligand>
        <name>a divalent metal cation</name>
        <dbReference type="ChEBI" id="CHEBI:60240"/>
        <label>2</label>
    </ligand>
</feature>
<feature type="binding site" evidence="1">
    <location>
        <position position="207"/>
    </location>
    <ligand>
        <name>a divalent metal cation</name>
        <dbReference type="ChEBI" id="CHEBI:60240"/>
        <label>2</label>
    </ligand>
</feature>
<feature type="binding site" evidence="1">
    <location>
        <position position="209"/>
    </location>
    <ligand>
        <name>a divalent metal cation</name>
        <dbReference type="ChEBI" id="CHEBI:60240"/>
        <label>1</label>
    </ligand>
</feature>
<accession>O35040</accession>
<proteinExistence type="inferred from homology"/>
<organism>
    <name type="scientific">Bacillus subtilis (strain 168)</name>
    <dbReference type="NCBI Taxonomy" id="224308"/>
    <lineage>
        <taxon>Bacteria</taxon>
        <taxon>Bacillati</taxon>
        <taxon>Bacillota</taxon>
        <taxon>Bacilli</taxon>
        <taxon>Bacillales</taxon>
        <taxon>Bacillaceae</taxon>
        <taxon>Bacillus</taxon>
    </lineage>
</organism>
<evidence type="ECO:0000250" key="1"/>
<evidence type="ECO:0000305" key="2"/>
<comment type="cofactor">
    <cofactor evidence="1">
        <name>a divalent metal cation</name>
        <dbReference type="ChEBI" id="CHEBI:60240"/>
    </cofactor>
    <text evidence="1">Binds 2 divalent metal cations.</text>
</comment>
<comment type="similarity">
    <text evidence="2">Belongs to the metallophosphoesterase superfamily.</text>
</comment>